<feature type="chain" id="PRO_0000367242" description="UPF0173 metal-dependent hydrolase Tneu_1348">
    <location>
        <begin position="1"/>
        <end position="225"/>
    </location>
</feature>
<evidence type="ECO:0000255" key="1">
    <source>
        <dbReference type="HAMAP-Rule" id="MF_00457"/>
    </source>
</evidence>
<protein>
    <recommendedName>
        <fullName evidence="1">UPF0173 metal-dependent hydrolase Tneu_1348</fullName>
    </recommendedName>
</protein>
<accession>B1Y945</accession>
<sequence length="225" mass="24703">MQIRWFGHSAFMVEVQGLKLLIDPWISNPLSPTSPQEVANMRPTHILITHDHFDHMGDAVDISKAAGAPIVGTYELTLEVAEKGIPEAQTVPMNIGGTIKLGDGVEVYMTPALHTANRGAPSGFVIATPQGTVYHAGDTGLFRDMELIAELYDIDVAMLPIGSVFTMGPREAAIATQFLRPRRVVPMHYNTFPLIRQDPEDFKARVEAVSRAKVYIMKPGDVLKL</sequence>
<proteinExistence type="inferred from homology"/>
<comment type="similarity">
    <text evidence="1">Belongs to the UPF0173 family.</text>
</comment>
<name>Y1348_PYRNV</name>
<gene>
    <name type="ordered locus">Tneu_1348</name>
</gene>
<reference key="1">
    <citation type="submission" date="2008-03" db="EMBL/GenBank/DDBJ databases">
        <title>Complete sequence of Thermoproteus neutrophilus V24Sta.</title>
        <authorList>
            <consortium name="US DOE Joint Genome Institute"/>
            <person name="Copeland A."/>
            <person name="Lucas S."/>
            <person name="Lapidus A."/>
            <person name="Glavina del Rio T."/>
            <person name="Dalin E."/>
            <person name="Tice H."/>
            <person name="Bruce D."/>
            <person name="Goodwin L."/>
            <person name="Pitluck S."/>
            <person name="Sims D."/>
            <person name="Brettin T."/>
            <person name="Detter J.C."/>
            <person name="Han C."/>
            <person name="Kuske C.R."/>
            <person name="Schmutz J."/>
            <person name="Larimer F."/>
            <person name="Land M."/>
            <person name="Hauser L."/>
            <person name="Kyrpides N."/>
            <person name="Mikhailova N."/>
            <person name="Biddle J.F."/>
            <person name="Zhang Z."/>
            <person name="Fitz-Gibbon S.T."/>
            <person name="Lowe T.M."/>
            <person name="Saltikov C."/>
            <person name="House C.H."/>
            <person name="Richardson P."/>
        </authorList>
    </citation>
    <scope>NUCLEOTIDE SEQUENCE [LARGE SCALE GENOMIC DNA]</scope>
    <source>
        <strain>DSM 2338 / JCM 9278 / NBRC 100436 / V24Sta</strain>
    </source>
</reference>
<keyword id="KW-0378">Hydrolase</keyword>
<dbReference type="EMBL" id="CP001014">
    <property type="protein sequence ID" value="ACB40274.1"/>
    <property type="molecule type" value="Genomic_DNA"/>
</dbReference>
<dbReference type="RefSeq" id="WP_012350693.1">
    <property type="nucleotide sequence ID" value="NC_010525.1"/>
</dbReference>
<dbReference type="SMR" id="B1Y945"/>
<dbReference type="STRING" id="444157.Tneu_1348"/>
<dbReference type="GeneID" id="6165193"/>
<dbReference type="KEGG" id="tne:Tneu_1348"/>
<dbReference type="eggNOG" id="arCOG00497">
    <property type="taxonomic scope" value="Archaea"/>
</dbReference>
<dbReference type="HOGENOM" id="CLU_070010_4_0_2"/>
<dbReference type="OrthoDB" id="28313at2157"/>
<dbReference type="Proteomes" id="UP000001694">
    <property type="component" value="Chromosome"/>
</dbReference>
<dbReference type="GO" id="GO:0016787">
    <property type="term" value="F:hydrolase activity"/>
    <property type="evidence" value="ECO:0007669"/>
    <property type="project" value="UniProtKB-UniRule"/>
</dbReference>
<dbReference type="Gene3D" id="3.60.15.10">
    <property type="entry name" value="Ribonuclease Z/Hydroxyacylglutathione hydrolase-like"/>
    <property type="match status" value="1"/>
</dbReference>
<dbReference type="HAMAP" id="MF_00457">
    <property type="entry name" value="UPF0173"/>
    <property type="match status" value="1"/>
</dbReference>
<dbReference type="InterPro" id="IPR001279">
    <property type="entry name" value="Metallo-B-lactamas"/>
</dbReference>
<dbReference type="InterPro" id="IPR036866">
    <property type="entry name" value="RibonucZ/Hydroxyglut_hydro"/>
</dbReference>
<dbReference type="InterPro" id="IPR022877">
    <property type="entry name" value="UPF0173"/>
</dbReference>
<dbReference type="InterPro" id="IPR050114">
    <property type="entry name" value="UPF0173_UPF0282_UlaG_hydrolase"/>
</dbReference>
<dbReference type="NCBIfam" id="NF001911">
    <property type="entry name" value="PRK00685.1"/>
    <property type="match status" value="1"/>
</dbReference>
<dbReference type="PANTHER" id="PTHR43546:SF3">
    <property type="entry name" value="UPF0173 METAL-DEPENDENT HYDROLASE MJ1163"/>
    <property type="match status" value="1"/>
</dbReference>
<dbReference type="PANTHER" id="PTHR43546">
    <property type="entry name" value="UPF0173 METAL-DEPENDENT HYDROLASE MJ1163-RELATED"/>
    <property type="match status" value="1"/>
</dbReference>
<dbReference type="Pfam" id="PF12706">
    <property type="entry name" value="Lactamase_B_2"/>
    <property type="match status" value="1"/>
</dbReference>
<dbReference type="SMART" id="SM00849">
    <property type="entry name" value="Lactamase_B"/>
    <property type="match status" value="1"/>
</dbReference>
<dbReference type="SUPFAM" id="SSF56281">
    <property type="entry name" value="Metallo-hydrolase/oxidoreductase"/>
    <property type="match status" value="1"/>
</dbReference>
<organism>
    <name type="scientific">Pyrobaculum neutrophilum (strain DSM 2338 / JCM 9278 / NBRC 100436 / V24Sta)</name>
    <name type="common">Thermoproteus neutrophilus</name>
    <dbReference type="NCBI Taxonomy" id="444157"/>
    <lineage>
        <taxon>Archaea</taxon>
        <taxon>Thermoproteota</taxon>
        <taxon>Thermoprotei</taxon>
        <taxon>Thermoproteales</taxon>
        <taxon>Thermoproteaceae</taxon>
        <taxon>Pyrobaculum</taxon>
    </lineage>
</organism>